<gene>
    <name evidence="1" type="primary">alaS</name>
    <name type="ordered locus">Pput_1441</name>
</gene>
<sequence>MKSAEIREAFLRFFEEQGHTRVASSSLIPNNDPTLLFTNAGMNQFKDCFLGAEKRAYTRAVSSQKCVRAGGKHNDLENVGYTARHHTFFEMLGNFSFGDYFKRDAITFAWTFLTSEQWLNLPKEKLWVTVYATDDEAYDIWTKEVGVPAERMVRIGDNKGAPYASDNFWTMGDTGPCGPCTEIFYDHGPDIWGGPPGSPEEDGDRYIEIWNNVFMQFNRTADGVLHPLPAPSVDTGMGLERVSAVLQHVHSNYEIDLFQNLLAAAAKAIGCSNDGQASLKVVADHIRSCGFLIADGVLPSNEGRGYVLRRIIRRACRHGNKLGAKGSFFYQIVAALAAEMGEAFPELKSQQAHIERVLKAEEEQFAKTLEQGLRILEQDLAQLKGDVVPGDVVFKLYDTYGFPMDLTADIARERELTIDEAGFEREMDAQRERARSASAFGMDYNSLVKVDSATEFLGYDTTEGQGKIIALYKDGQSVDQLGEGEQGVVVLDRTPFYAESGGQVGDSGFLQAGAARFDVRDTTKTGGAFLHHGVVASGALLIGSPVEAKVDADVQHATSLNHSATHLLHEALRQVLGEHVQQKGSLVDSQRLRFDFSHFEAVKPEQIKQLEDIVNREIRKNTPVETELTDIETAKAKGAMALFGEKYGDTVRVLSMGGDFSVELCGGIHAKRTGDISLFKIISEGGVASGVRRIEAVTGAAALAYLNAAEEQVKEAAQLVKGNRDNLIDKLSAVLERNRQLEKQLEQLQAKAASAAGDDLSNAAVEVKGAKVLAARLDGQDGKALLALVDQLKNKLGHAVILLGSEHEGKVVLVAGVTKDLSSQLKAGDLMKQAAAAVGGKGGGRPDMAQGGGVDVAALDQALALAVPFAEQGL</sequence>
<evidence type="ECO:0000255" key="1">
    <source>
        <dbReference type="HAMAP-Rule" id="MF_00036"/>
    </source>
</evidence>
<evidence type="ECO:0000305" key="2"/>
<accession>A5W0D9</accession>
<proteinExistence type="inferred from homology"/>
<feature type="chain" id="PRO_0000347740" description="Alanine--tRNA ligase">
    <location>
        <begin position="1"/>
        <end position="874"/>
    </location>
</feature>
<feature type="binding site" evidence="1">
    <location>
        <position position="562"/>
    </location>
    <ligand>
        <name>Zn(2+)</name>
        <dbReference type="ChEBI" id="CHEBI:29105"/>
    </ligand>
</feature>
<feature type="binding site" evidence="1">
    <location>
        <position position="566"/>
    </location>
    <ligand>
        <name>Zn(2+)</name>
        <dbReference type="ChEBI" id="CHEBI:29105"/>
    </ligand>
</feature>
<feature type="binding site" evidence="1">
    <location>
        <position position="665"/>
    </location>
    <ligand>
        <name>Zn(2+)</name>
        <dbReference type="ChEBI" id="CHEBI:29105"/>
    </ligand>
</feature>
<feature type="binding site" evidence="1">
    <location>
        <position position="669"/>
    </location>
    <ligand>
        <name>Zn(2+)</name>
        <dbReference type="ChEBI" id="CHEBI:29105"/>
    </ligand>
</feature>
<organism>
    <name type="scientific">Pseudomonas putida (strain ATCC 700007 / DSM 6899 / JCM 31910 / BCRC 17059 / LMG 24140 / F1)</name>
    <dbReference type="NCBI Taxonomy" id="351746"/>
    <lineage>
        <taxon>Bacteria</taxon>
        <taxon>Pseudomonadati</taxon>
        <taxon>Pseudomonadota</taxon>
        <taxon>Gammaproteobacteria</taxon>
        <taxon>Pseudomonadales</taxon>
        <taxon>Pseudomonadaceae</taxon>
        <taxon>Pseudomonas</taxon>
    </lineage>
</organism>
<keyword id="KW-0030">Aminoacyl-tRNA synthetase</keyword>
<keyword id="KW-0067">ATP-binding</keyword>
<keyword id="KW-0963">Cytoplasm</keyword>
<keyword id="KW-0436">Ligase</keyword>
<keyword id="KW-0479">Metal-binding</keyword>
<keyword id="KW-0547">Nucleotide-binding</keyword>
<keyword id="KW-0648">Protein biosynthesis</keyword>
<keyword id="KW-0694">RNA-binding</keyword>
<keyword id="KW-0820">tRNA-binding</keyword>
<keyword id="KW-0862">Zinc</keyword>
<protein>
    <recommendedName>
        <fullName evidence="1">Alanine--tRNA ligase</fullName>
        <ecNumber evidence="1">6.1.1.7</ecNumber>
    </recommendedName>
    <alternativeName>
        <fullName evidence="1">Alanyl-tRNA synthetase</fullName>
        <shortName evidence="1">AlaRS</shortName>
    </alternativeName>
</protein>
<name>SYA_PSEP1</name>
<comment type="function">
    <text evidence="1">Catalyzes the attachment of alanine to tRNA(Ala) in a two-step reaction: alanine is first activated by ATP to form Ala-AMP and then transferred to the acceptor end of tRNA(Ala). Also edits incorrectly charged Ser-tRNA(Ala) and Gly-tRNA(Ala) via its editing domain.</text>
</comment>
<comment type="catalytic activity">
    <reaction evidence="1">
        <text>tRNA(Ala) + L-alanine + ATP = L-alanyl-tRNA(Ala) + AMP + diphosphate</text>
        <dbReference type="Rhea" id="RHEA:12540"/>
        <dbReference type="Rhea" id="RHEA-COMP:9657"/>
        <dbReference type="Rhea" id="RHEA-COMP:9923"/>
        <dbReference type="ChEBI" id="CHEBI:30616"/>
        <dbReference type="ChEBI" id="CHEBI:33019"/>
        <dbReference type="ChEBI" id="CHEBI:57972"/>
        <dbReference type="ChEBI" id="CHEBI:78442"/>
        <dbReference type="ChEBI" id="CHEBI:78497"/>
        <dbReference type="ChEBI" id="CHEBI:456215"/>
        <dbReference type="EC" id="6.1.1.7"/>
    </reaction>
</comment>
<comment type="cofactor">
    <cofactor evidence="1">
        <name>Zn(2+)</name>
        <dbReference type="ChEBI" id="CHEBI:29105"/>
    </cofactor>
    <text evidence="1">Binds 1 zinc ion per subunit.</text>
</comment>
<comment type="subcellular location">
    <subcellularLocation>
        <location evidence="1">Cytoplasm</location>
    </subcellularLocation>
</comment>
<comment type="domain">
    <text evidence="1">Consists of three domains; the N-terminal catalytic domain, the editing domain and the C-terminal C-Ala domain. The editing domain removes incorrectly charged amino acids, while the C-Ala domain, along with tRNA(Ala), serves as a bridge to cooperatively bring together the editing and aminoacylation centers thus stimulating deacylation of misacylated tRNAs.</text>
</comment>
<comment type="similarity">
    <text evidence="1">Belongs to the class-II aminoacyl-tRNA synthetase family.</text>
</comment>
<comment type="sequence caution" evidence="2">
    <conflict type="erroneous initiation">
        <sequence resource="EMBL-CDS" id="ABQ77599"/>
    </conflict>
</comment>
<reference key="1">
    <citation type="submission" date="2007-05" db="EMBL/GenBank/DDBJ databases">
        <title>Complete sequence of Pseudomonas putida F1.</title>
        <authorList>
            <consortium name="US DOE Joint Genome Institute"/>
            <person name="Copeland A."/>
            <person name="Lucas S."/>
            <person name="Lapidus A."/>
            <person name="Barry K."/>
            <person name="Detter J.C."/>
            <person name="Glavina del Rio T."/>
            <person name="Hammon N."/>
            <person name="Israni S."/>
            <person name="Dalin E."/>
            <person name="Tice H."/>
            <person name="Pitluck S."/>
            <person name="Chain P."/>
            <person name="Malfatti S."/>
            <person name="Shin M."/>
            <person name="Vergez L."/>
            <person name="Schmutz J."/>
            <person name="Larimer F."/>
            <person name="Land M."/>
            <person name="Hauser L."/>
            <person name="Kyrpides N."/>
            <person name="Lykidis A."/>
            <person name="Parales R."/>
            <person name="Richardson P."/>
        </authorList>
    </citation>
    <scope>NUCLEOTIDE SEQUENCE [LARGE SCALE GENOMIC DNA]</scope>
    <source>
        <strain>ATCC 700007 / DSM 6899 / JCM 31910 / BCRC 17059 / LMG 24140 / F1</strain>
    </source>
</reference>
<dbReference type="EC" id="6.1.1.7" evidence="1"/>
<dbReference type="EMBL" id="CP000712">
    <property type="protein sequence ID" value="ABQ77599.1"/>
    <property type="status" value="ALT_INIT"/>
    <property type="molecule type" value="Genomic_DNA"/>
</dbReference>
<dbReference type="SMR" id="A5W0D9"/>
<dbReference type="KEGG" id="ppf:Pput_1441"/>
<dbReference type="eggNOG" id="COG0013">
    <property type="taxonomic scope" value="Bacteria"/>
</dbReference>
<dbReference type="HOGENOM" id="CLU_004485_1_1_6"/>
<dbReference type="GO" id="GO:0005829">
    <property type="term" value="C:cytosol"/>
    <property type="evidence" value="ECO:0007669"/>
    <property type="project" value="TreeGrafter"/>
</dbReference>
<dbReference type="GO" id="GO:0004813">
    <property type="term" value="F:alanine-tRNA ligase activity"/>
    <property type="evidence" value="ECO:0007669"/>
    <property type="project" value="UniProtKB-UniRule"/>
</dbReference>
<dbReference type="GO" id="GO:0002161">
    <property type="term" value="F:aminoacyl-tRNA deacylase activity"/>
    <property type="evidence" value="ECO:0007669"/>
    <property type="project" value="TreeGrafter"/>
</dbReference>
<dbReference type="GO" id="GO:0005524">
    <property type="term" value="F:ATP binding"/>
    <property type="evidence" value="ECO:0007669"/>
    <property type="project" value="UniProtKB-UniRule"/>
</dbReference>
<dbReference type="GO" id="GO:0000049">
    <property type="term" value="F:tRNA binding"/>
    <property type="evidence" value="ECO:0007669"/>
    <property type="project" value="UniProtKB-KW"/>
</dbReference>
<dbReference type="GO" id="GO:0008270">
    <property type="term" value="F:zinc ion binding"/>
    <property type="evidence" value="ECO:0007669"/>
    <property type="project" value="UniProtKB-UniRule"/>
</dbReference>
<dbReference type="GO" id="GO:0006419">
    <property type="term" value="P:alanyl-tRNA aminoacylation"/>
    <property type="evidence" value="ECO:0007669"/>
    <property type="project" value="UniProtKB-UniRule"/>
</dbReference>
<dbReference type="GO" id="GO:0045892">
    <property type="term" value="P:negative regulation of DNA-templated transcription"/>
    <property type="evidence" value="ECO:0007669"/>
    <property type="project" value="TreeGrafter"/>
</dbReference>
<dbReference type="CDD" id="cd00673">
    <property type="entry name" value="AlaRS_core"/>
    <property type="match status" value="1"/>
</dbReference>
<dbReference type="FunFam" id="2.40.30.130:FF:000001">
    <property type="entry name" value="Alanine--tRNA ligase"/>
    <property type="match status" value="1"/>
</dbReference>
<dbReference type="FunFam" id="3.10.310.40:FF:000001">
    <property type="entry name" value="Alanine--tRNA ligase"/>
    <property type="match status" value="1"/>
</dbReference>
<dbReference type="FunFam" id="3.30.54.20:FF:000001">
    <property type="entry name" value="Alanine--tRNA ligase"/>
    <property type="match status" value="1"/>
</dbReference>
<dbReference type="FunFam" id="3.30.930.10:FF:000004">
    <property type="entry name" value="Alanine--tRNA ligase"/>
    <property type="match status" value="1"/>
</dbReference>
<dbReference type="FunFam" id="3.30.980.10:FF:000004">
    <property type="entry name" value="Alanine--tRNA ligase, cytoplasmic"/>
    <property type="match status" value="1"/>
</dbReference>
<dbReference type="Gene3D" id="2.40.30.130">
    <property type="match status" value="1"/>
</dbReference>
<dbReference type="Gene3D" id="3.10.310.40">
    <property type="match status" value="1"/>
</dbReference>
<dbReference type="Gene3D" id="3.30.54.20">
    <property type="match status" value="1"/>
</dbReference>
<dbReference type="Gene3D" id="6.10.250.550">
    <property type="match status" value="1"/>
</dbReference>
<dbReference type="Gene3D" id="3.30.930.10">
    <property type="entry name" value="Bira Bifunctional Protein, Domain 2"/>
    <property type="match status" value="1"/>
</dbReference>
<dbReference type="Gene3D" id="3.30.980.10">
    <property type="entry name" value="Threonyl-trna Synthetase, Chain A, domain 2"/>
    <property type="match status" value="1"/>
</dbReference>
<dbReference type="HAMAP" id="MF_00036_B">
    <property type="entry name" value="Ala_tRNA_synth_B"/>
    <property type="match status" value="1"/>
</dbReference>
<dbReference type="InterPro" id="IPR045864">
    <property type="entry name" value="aa-tRNA-synth_II/BPL/LPL"/>
</dbReference>
<dbReference type="InterPro" id="IPR002318">
    <property type="entry name" value="Ala-tRNA-lgiase_IIc"/>
</dbReference>
<dbReference type="InterPro" id="IPR018162">
    <property type="entry name" value="Ala-tRNA-ligase_IIc_anticod-bd"/>
</dbReference>
<dbReference type="InterPro" id="IPR018165">
    <property type="entry name" value="Ala-tRNA-synth_IIc_core"/>
</dbReference>
<dbReference type="InterPro" id="IPR018164">
    <property type="entry name" value="Ala-tRNA-synth_IIc_N"/>
</dbReference>
<dbReference type="InterPro" id="IPR050058">
    <property type="entry name" value="Ala-tRNA_ligase"/>
</dbReference>
<dbReference type="InterPro" id="IPR023033">
    <property type="entry name" value="Ala_tRNA_ligase_euk/bac"/>
</dbReference>
<dbReference type="InterPro" id="IPR003156">
    <property type="entry name" value="DHHA1_dom"/>
</dbReference>
<dbReference type="InterPro" id="IPR018163">
    <property type="entry name" value="Thr/Ala-tRNA-synth_IIc_edit"/>
</dbReference>
<dbReference type="InterPro" id="IPR009000">
    <property type="entry name" value="Transl_B-barrel_sf"/>
</dbReference>
<dbReference type="InterPro" id="IPR012947">
    <property type="entry name" value="tRNA_SAD"/>
</dbReference>
<dbReference type="NCBIfam" id="TIGR00344">
    <property type="entry name" value="alaS"/>
    <property type="match status" value="1"/>
</dbReference>
<dbReference type="PANTHER" id="PTHR11777:SF9">
    <property type="entry name" value="ALANINE--TRNA LIGASE, CYTOPLASMIC"/>
    <property type="match status" value="1"/>
</dbReference>
<dbReference type="PANTHER" id="PTHR11777">
    <property type="entry name" value="ALANYL-TRNA SYNTHETASE"/>
    <property type="match status" value="1"/>
</dbReference>
<dbReference type="Pfam" id="PF02272">
    <property type="entry name" value="DHHA1"/>
    <property type="match status" value="1"/>
</dbReference>
<dbReference type="Pfam" id="PF01411">
    <property type="entry name" value="tRNA-synt_2c"/>
    <property type="match status" value="1"/>
</dbReference>
<dbReference type="Pfam" id="PF07973">
    <property type="entry name" value="tRNA_SAD"/>
    <property type="match status" value="1"/>
</dbReference>
<dbReference type="PRINTS" id="PR00980">
    <property type="entry name" value="TRNASYNTHALA"/>
</dbReference>
<dbReference type="SMART" id="SM00863">
    <property type="entry name" value="tRNA_SAD"/>
    <property type="match status" value="1"/>
</dbReference>
<dbReference type="SUPFAM" id="SSF55681">
    <property type="entry name" value="Class II aaRS and biotin synthetases"/>
    <property type="match status" value="1"/>
</dbReference>
<dbReference type="SUPFAM" id="SSF101353">
    <property type="entry name" value="Putative anticodon-binding domain of alanyl-tRNA synthetase (AlaRS)"/>
    <property type="match status" value="1"/>
</dbReference>
<dbReference type="SUPFAM" id="SSF55186">
    <property type="entry name" value="ThrRS/AlaRS common domain"/>
    <property type="match status" value="1"/>
</dbReference>
<dbReference type="SUPFAM" id="SSF50447">
    <property type="entry name" value="Translation proteins"/>
    <property type="match status" value="1"/>
</dbReference>
<dbReference type="PROSITE" id="PS50860">
    <property type="entry name" value="AA_TRNA_LIGASE_II_ALA"/>
    <property type="match status" value="1"/>
</dbReference>